<geneLocation type="chloroplast"/>
<organism>
    <name type="scientific">Cryptomeria japonica</name>
    <name type="common">Japanese cedar</name>
    <name type="synonym">Cupressus japonica</name>
    <dbReference type="NCBI Taxonomy" id="3369"/>
    <lineage>
        <taxon>Eukaryota</taxon>
        <taxon>Viridiplantae</taxon>
        <taxon>Streptophyta</taxon>
        <taxon>Embryophyta</taxon>
        <taxon>Tracheophyta</taxon>
        <taxon>Spermatophyta</taxon>
        <taxon>Pinopsida</taxon>
        <taxon>Pinidae</taxon>
        <taxon>Conifers II</taxon>
        <taxon>Cupressales</taxon>
        <taxon>Cupressaceae</taxon>
        <taxon>Cryptomeria</taxon>
    </lineage>
</organism>
<proteinExistence type="inferred from homology"/>
<gene>
    <name evidence="1" type="primary">psbT</name>
</gene>
<protein>
    <recommendedName>
        <fullName evidence="1">Photosystem II reaction center protein T</fullName>
        <shortName evidence="1">PSII-T</shortName>
    </recommendedName>
</protein>
<accession>Q5IHC3</accession>
<accession>B1VKC2</accession>
<dbReference type="EMBL" id="AY727379">
    <property type="protein sequence ID" value="AAW56520.1"/>
    <property type="molecule type" value="Genomic_DNA"/>
</dbReference>
<dbReference type="EMBL" id="AP009377">
    <property type="protein sequence ID" value="BAG16633.1"/>
    <property type="molecule type" value="Genomic_DNA"/>
</dbReference>
<dbReference type="RefSeq" id="YP_001806635.1">
    <property type="nucleotide sequence ID" value="NC_010548.1"/>
</dbReference>
<dbReference type="SMR" id="Q5IHC3"/>
<dbReference type="GeneID" id="6166533"/>
<dbReference type="KEGG" id="cjf:6166533"/>
<dbReference type="OrthoDB" id="1558483at2759"/>
<dbReference type="GO" id="GO:0009535">
    <property type="term" value="C:chloroplast thylakoid membrane"/>
    <property type="evidence" value="ECO:0007669"/>
    <property type="project" value="UniProtKB-SubCell"/>
</dbReference>
<dbReference type="GO" id="GO:0009539">
    <property type="term" value="C:photosystem II reaction center"/>
    <property type="evidence" value="ECO:0007669"/>
    <property type="project" value="InterPro"/>
</dbReference>
<dbReference type="GO" id="GO:0015979">
    <property type="term" value="P:photosynthesis"/>
    <property type="evidence" value="ECO:0007669"/>
    <property type="project" value="UniProtKB-UniRule"/>
</dbReference>
<dbReference type="HAMAP" id="MF_00808">
    <property type="entry name" value="PSII_PsbT"/>
    <property type="match status" value="1"/>
</dbReference>
<dbReference type="InterPro" id="IPR001743">
    <property type="entry name" value="PSII_PsbT"/>
</dbReference>
<dbReference type="InterPro" id="IPR037268">
    <property type="entry name" value="PSII_PsbT_sf"/>
</dbReference>
<dbReference type="PANTHER" id="PTHR36411">
    <property type="match status" value="1"/>
</dbReference>
<dbReference type="PANTHER" id="PTHR36411:SF2">
    <property type="entry name" value="PHOTOSYSTEM II REACTION CENTER PROTEIN T"/>
    <property type="match status" value="1"/>
</dbReference>
<dbReference type="Pfam" id="PF01405">
    <property type="entry name" value="PsbT"/>
    <property type="match status" value="1"/>
</dbReference>
<dbReference type="SUPFAM" id="SSF161029">
    <property type="entry name" value="Photosystem II reaction center protein T, PsbT"/>
    <property type="match status" value="1"/>
</dbReference>
<keyword id="KW-0150">Chloroplast</keyword>
<keyword id="KW-0472">Membrane</keyword>
<keyword id="KW-0602">Photosynthesis</keyword>
<keyword id="KW-0604">Photosystem II</keyword>
<keyword id="KW-0934">Plastid</keyword>
<keyword id="KW-0793">Thylakoid</keyword>
<keyword id="KW-0812">Transmembrane</keyword>
<keyword id="KW-1133">Transmembrane helix</keyword>
<feature type="chain" id="PRO_0000217921" description="Photosystem II reaction center protein T">
    <location>
        <begin position="1"/>
        <end position="35"/>
    </location>
</feature>
<feature type="transmembrane region" description="Helical" evidence="1">
    <location>
        <begin position="3"/>
        <end position="23"/>
    </location>
</feature>
<sequence length="35" mass="3974">MEALVYTFLLVSTLGIIFFAIFFREPPKVPDRGGK</sequence>
<evidence type="ECO:0000255" key="1">
    <source>
        <dbReference type="HAMAP-Rule" id="MF_00808"/>
    </source>
</evidence>
<name>PSBT_CRYJA</name>
<reference key="1">
    <citation type="journal article" date="2005" name="Am. J. Bot.">
        <title>The tortoise and the hare II: relative utility of 21 noncoding chloroplast DNA sequences for phylogenetic analysis.</title>
        <authorList>
            <person name="Shaw J."/>
            <person name="Lickey E.B."/>
            <person name="Beck J.T."/>
            <person name="Farmer S.B."/>
            <person name="Liu W."/>
            <person name="Miller J."/>
            <person name="Siripun K.C."/>
            <person name="Winder C.T."/>
            <person name="Schilling E.E."/>
            <person name="Small R.L."/>
        </authorList>
        <dbReference type="AGRICOLA" id="IND43689705"/>
    </citation>
    <scope>NUCLEOTIDE SEQUENCE [GENOMIC DNA]</scope>
</reference>
<reference key="2">
    <citation type="journal article" date="2008" name="BMC Plant Biol.">
        <title>Complete nucleotide sequence of the Cryptomeria japonica D. Don. chloroplast genome and comparative chloroplast genomics: diversified genomic structure of coniferous species.</title>
        <authorList>
            <person name="Hirao T."/>
            <person name="Watanabe A."/>
            <person name="Kurita M."/>
            <person name="Kondo T."/>
            <person name="Takata K."/>
        </authorList>
    </citation>
    <scope>NUCLEOTIDE SEQUENCE [LARGE SCALE GENOMIC DNA]</scope>
</reference>
<comment type="function">
    <text evidence="1">Found at the monomer-monomer interface of the photosystem II (PS II) dimer, plays a role in assembly and dimerization of PSII. PSII is a light-driven water plastoquinone oxidoreductase, using light energy to abstract electrons from H(2)O, generating a proton gradient subsequently used for ATP formation.</text>
</comment>
<comment type="subunit">
    <text evidence="1">PSII is composed of 1 copy each of membrane proteins PsbA, PsbB, PsbC, PsbD, PsbE, PsbF, PsbH, PsbI, PsbJ, PsbK, PsbL, PsbM, PsbT, PsbY, PsbZ, Psb30/Ycf12, at least 3 peripheral proteins of the oxygen-evolving complex and a large number of cofactors. It forms dimeric complexes.</text>
</comment>
<comment type="subcellular location">
    <subcellularLocation>
        <location evidence="1">Plastid</location>
        <location evidence="1">Chloroplast thylakoid membrane</location>
        <topology evidence="1">Single-pass membrane protein</topology>
    </subcellularLocation>
</comment>
<comment type="similarity">
    <text evidence="1">Belongs to the PsbT family.</text>
</comment>